<name>GNAQ_MIZYE</name>
<proteinExistence type="evidence at transcript level"/>
<sequence>MACCLSEEAKEQKRINCEIEKELRKAKRDARRELKLLLLGTGESGKSTFIKQMRIIHGTGYSEEDKRGFIKIVYQNIFMAMHSMIRAMDTIKISFEVADNEENAIMIRQVDYETVTTLDSQSVEAILSLWADAGIQECYDRRREYQLTDSAKYYLDAVDRIAEPNYLPTLQDILRVRVPTTGIIEYPFDLDSIIFRMVDVGGQRSERRKWIHCFENVTSIMFLVALSEYDQVLVESDNENRMEESKALFRTIITYPWFQNSSVILFLNKKDLLEEKIMHSHLVDYFPEFDGQKKDAQGAREFILRMFVDLNPDPDKIIYSHFTCATDTENIRFVFAAVKDTILQLNLKEYNLV</sequence>
<protein>
    <recommendedName>
        <fullName>Guanine nucleotide-binding protein G(q) subunit alpha</fullName>
    </recommendedName>
    <alternativeName>
        <fullName>Guanine nucleotide-binding protein alpha-q</fullName>
    </alternativeName>
</protein>
<organism>
    <name type="scientific">Mizuhopecten yessoensis</name>
    <name type="common">Japanese scallop</name>
    <name type="synonym">Patinopecten yessoensis</name>
    <dbReference type="NCBI Taxonomy" id="6573"/>
    <lineage>
        <taxon>Eukaryota</taxon>
        <taxon>Metazoa</taxon>
        <taxon>Spiralia</taxon>
        <taxon>Lophotrochozoa</taxon>
        <taxon>Mollusca</taxon>
        <taxon>Bivalvia</taxon>
        <taxon>Autobranchia</taxon>
        <taxon>Pteriomorphia</taxon>
        <taxon>Pectinida</taxon>
        <taxon>Pectinoidea</taxon>
        <taxon>Pectinidae</taxon>
        <taxon>Mizuhopecten</taxon>
    </lineage>
</organism>
<keyword id="KW-0342">GTP-binding</keyword>
<keyword id="KW-0449">Lipoprotein</keyword>
<keyword id="KW-0460">Magnesium</keyword>
<keyword id="KW-0479">Metal-binding</keyword>
<keyword id="KW-0547">Nucleotide-binding</keyword>
<keyword id="KW-0564">Palmitate</keyword>
<keyword id="KW-0807">Transducer</keyword>
<evidence type="ECO:0000250" key="1"/>
<evidence type="ECO:0000255" key="2"/>
<evidence type="ECO:0000255" key="3">
    <source>
        <dbReference type="PROSITE-ProRule" id="PRU01230"/>
    </source>
</evidence>
<evidence type="ECO:0000305" key="4"/>
<comment type="function">
    <text>Guanine nucleotide-binding proteins (G proteins) are involved as modulators or transducers in various transmembrane signaling systems.</text>
</comment>
<comment type="subunit">
    <text>G proteins are composed of 3 units; alpha, beta and gamma. The alpha chain contains the guanine nucleotide binding site.</text>
</comment>
<comment type="similarity">
    <text evidence="4">Belongs to the G-alpha family. G(q) subfamily.</text>
</comment>
<accession>O15975</accession>
<gene>
    <name type="primary">SCGQA</name>
</gene>
<feature type="chain" id="PRO_0000203768" description="Guanine nucleotide-binding protein G(q) subunit alpha">
    <location>
        <begin position="1"/>
        <end position="353"/>
    </location>
</feature>
<feature type="domain" description="G-alpha" evidence="3">
    <location>
        <begin position="32"/>
        <end position="353"/>
    </location>
</feature>
<feature type="region of interest" description="G1 motif" evidence="3">
    <location>
        <begin position="35"/>
        <end position="48"/>
    </location>
</feature>
<feature type="region of interest" description="G2 motif" evidence="3">
    <location>
        <begin position="172"/>
        <end position="180"/>
    </location>
</feature>
<feature type="region of interest" description="G3 motif" evidence="3">
    <location>
        <begin position="195"/>
        <end position="204"/>
    </location>
</feature>
<feature type="region of interest" description="G4 motif" evidence="3">
    <location>
        <begin position="264"/>
        <end position="271"/>
    </location>
</feature>
<feature type="region of interest" description="G5 motif" evidence="3">
    <location>
        <begin position="323"/>
        <end position="328"/>
    </location>
</feature>
<feature type="binding site" evidence="1">
    <location>
        <begin position="40"/>
        <end position="47"/>
    </location>
    <ligand>
        <name>GTP</name>
        <dbReference type="ChEBI" id="CHEBI:37565"/>
    </ligand>
</feature>
<feature type="binding site" evidence="1">
    <location>
        <position position="47"/>
    </location>
    <ligand>
        <name>Mg(2+)</name>
        <dbReference type="ChEBI" id="CHEBI:18420"/>
    </ligand>
</feature>
<feature type="binding site" evidence="1">
    <location>
        <begin position="174"/>
        <end position="180"/>
    </location>
    <ligand>
        <name>GTP</name>
        <dbReference type="ChEBI" id="CHEBI:37565"/>
    </ligand>
</feature>
<feature type="binding site" evidence="1">
    <location>
        <position position="180"/>
    </location>
    <ligand>
        <name>Mg(2+)</name>
        <dbReference type="ChEBI" id="CHEBI:18420"/>
    </ligand>
</feature>
<feature type="binding site" evidence="1">
    <location>
        <begin position="199"/>
        <end position="203"/>
    </location>
    <ligand>
        <name>GTP</name>
        <dbReference type="ChEBI" id="CHEBI:37565"/>
    </ligand>
</feature>
<feature type="binding site" evidence="1">
    <location>
        <begin position="268"/>
        <end position="271"/>
    </location>
    <ligand>
        <name>GTP</name>
        <dbReference type="ChEBI" id="CHEBI:37565"/>
    </ligand>
</feature>
<feature type="binding site" evidence="1">
    <location>
        <position position="325"/>
    </location>
    <ligand>
        <name>GTP</name>
        <dbReference type="ChEBI" id="CHEBI:37565"/>
    </ligand>
</feature>
<feature type="lipid moiety-binding region" description="S-palmitoyl cysteine" evidence="2">
    <location>
        <position position="3"/>
    </location>
</feature>
<feature type="lipid moiety-binding region" description="S-palmitoyl cysteine" evidence="2">
    <location>
        <position position="4"/>
    </location>
</feature>
<reference key="1">
    <citation type="journal article" date="1997" name="J. Biol. Chem.">
        <title>A novel Go-mediated phototransduction cascade in scallop visual cells.</title>
        <authorList>
            <person name="Kojima D."/>
            <person name="Terakita A."/>
            <person name="Ishikawa T."/>
            <person name="Tsukahara Y."/>
            <person name="Maeda A."/>
            <person name="Shichida Y."/>
        </authorList>
    </citation>
    <scope>NUCLEOTIDE SEQUENCE [MRNA]</scope>
    <source>
        <tissue>Eye</tissue>
    </source>
</reference>
<dbReference type="EMBL" id="AB006456">
    <property type="protein sequence ID" value="BAA22219.1"/>
    <property type="molecule type" value="mRNA"/>
</dbReference>
<dbReference type="SMR" id="O15975"/>
<dbReference type="EnsemblMetazoa" id="XM_021522135.1">
    <property type="protein sequence ID" value="XP_021377810.1"/>
    <property type="gene ID" value="LOC110465944"/>
</dbReference>
<dbReference type="OrthoDB" id="5817230at2759"/>
<dbReference type="GO" id="GO:0005737">
    <property type="term" value="C:cytoplasm"/>
    <property type="evidence" value="ECO:0007669"/>
    <property type="project" value="TreeGrafter"/>
</dbReference>
<dbReference type="GO" id="GO:0005834">
    <property type="term" value="C:heterotrimeric G-protein complex"/>
    <property type="evidence" value="ECO:0007669"/>
    <property type="project" value="TreeGrafter"/>
</dbReference>
<dbReference type="GO" id="GO:0001664">
    <property type="term" value="F:G protein-coupled receptor binding"/>
    <property type="evidence" value="ECO:0007669"/>
    <property type="project" value="InterPro"/>
</dbReference>
<dbReference type="GO" id="GO:0031683">
    <property type="term" value="F:G-protein beta/gamma-subunit complex binding"/>
    <property type="evidence" value="ECO:0007669"/>
    <property type="project" value="InterPro"/>
</dbReference>
<dbReference type="GO" id="GO:0005525">
    <property type="term" value="F:GTP binding"/>
    <property type="evidence" value="ECO:0007669"/>
    <property type="project" value="UniProtKB-KW"/>
</dbReference>
<dbReference type="GO" id="GO:0003924">
    <property type="term" value="F:GTPase activity"/>
    <property type="evidence" value="ECO:0007669"/>
    <property type="project" value="InterPro"/>
</dbReference>
<dbReference type="GO" id="GO:0046872">
    <property type="term" value="F:metal ion binding"/>
    <property type="evidence" value="ECO:0007669"/>
    <property type="project" value="UniProtKB-KW"/>
</dbReference>
<dbReference type="GO" id="GO:0007188">
    <property type="term" value="P:adenylate cyclase-modulating G protein-coupled receptor signaling pathway"/>
    <property type="evidence" value="ECO:0007669"/>
    <property type="project" value="TreeGrafter"/>
</dbReference>
<dbReference type="CDD" id="cd00066">
    <property type="entry name" value="G-alpha"/>
    <property type="match status" value="1"/>
</dbReference>
<dbReference type="FunFam" id="3.40.50.300:FF:003977">
    <property type="entry name" value="Guanine nucleotide-binding protein G(q) subunit alpha"/>
    <property type="match status" value="1"/>
</dbReference>
<dbReference type="FunFam" id="1.10.400.10:FF:000002">
    <property type="entry name" value="guanine nucleotide-binding protein G(Q) subunit alpha"/>
    <property type="match status" value="1"/>
</dbReference>
<dbReference type="FunFam" id="3.40.50.300:FF:000692">
    <property type="entry name" value="Guanine nucleotide-binding protein subunit alpha"/>
    <property type="match status" value="1"/>
</dbReference>
<dbReference type="Gene3D" id="1.10.400.10">
    <property type="entry name" value="GI Alpha 1, domain 2-like"/>
    <property type="match status" value="1"/>
</dbReference>
<dbReference type="Gene3D" id="3.40.50.300">
    <property type="entry name" value="P-loop containing nucleotide triphosphate hydrolases"/>
    <property type="match status" value="1"/>
</dbReference>
<dbReference type="InterPro" id="IPR000654">
    <property type="entry name" value="Gprotein_alpha_Q"/>
</dbReference>
<dbReference type="InterPro" id="IPR001019">
    <property type="entry name" value="Gprotein_alpha_su"/>
</dbReference>
<dbReference type="InterPro" id="IPR011025">
    <property type="entry name" value="GproteinA_insert"/>
</dbReference>
<dbReference type="InterPro" id="IPR027417">
    <property type="entry name" value="P-loop_NTPase"/>
</dbReference>
<dbReference type="PANTHER" id="PTHR10218">
    <property type="entry name" value="GTP-BINDING PROTEIN ALPHA SUBUNIT"/>
    <property type="match status" value="1"/>
</dbReference>
<dbReference type="PANTHER" id="PTHR10218:SF329">
    <property type="entry name" value="GUANINE NUCLEOTIDE-BINDING PROTEIN G(Q) SUBUNIT ALPHA"/>
    <property type="match status" value="1"/>
</dbReference>
<dbReference type="Pfam" id="PF00503">
    <property type="entry name" value="G-alpha"/>
    <property type="match status" value="1"/>
</dbReference>
<dbReference type="PRINTS" id="PR00318">
    <property type="entry name" value="GPROTEINA"/>
</dbReference>
<dbReference type="PRINTS" id="PR00442">
    <property type="entry name" value="GPROTEINAQ"/>
</dbReference>
<dbReference type="SMART" id="SM00275">
    <property type="entry name" value="G_alpha"/>
    <property type="match status" value="1"/>
</dbReference>
<dbReference type="SUPFAM" id="SSF52540">
    <property type="entry name" value="P-loop containing nucleoside triphosphate hydrolases"/>
    <property type="match status" value="1"/>
</dbReference>
<dbReference type="SUPFAM" id="SSF47895">
    <property type="entry name" value="Transducin (alpha subunit), insertion domain"/>
    <property type="match status" value="1"/>
</dbReference>
<dbReference type="PROSITE" id="PS51882">
    <property type="entry name" value="G_ALPHA"/>
    <property type="match status" value="1"/>
</dbReference>